<reference key="1">
    <citation type="journal article" date="2003" name="Nat. Genet.">
        <title>Comparative analysis of the genome sequences of Bordetella pertussis, Bordetella parapertussis and Bordetella bronchiseptica.</title>
        <authorList>
            <person name="Parkhill J."/>
            <person name="Sebaihia M."/>
            <person name="Preston A."/>
            <person name="Murphy L.D."/>
            <person name="Thomson N.R."/>
            <person name="Harris D.E."/>
            <person name="Holden M.T.G."/>
            <person name="Churcher C.M."/>
            <person name="Bentley S.D."/>
            <person name="Mungall K.L."/>
            <person name="Cerdeno-Tarraga A.-M."/>
            <person name="Temple L."/>
            <person name="James K.D."/>
            <person name="Harris B."/>
            <person name="Quail M.A."/>
            <person name="Achtman M."/>
            <person name="Atkin R."/>
            <person name="Baker S."/>
            <person name="Basham D."/>
            <person name="Bason N."/>
            <person name="Cherevach I."/>
            <person name="Chillingworth T."/>
            <person name="Collins M."/>
            <person name="Cronin A."/>
            <person name="Davis P."/>
            <person name="Doggett J."/>
            <person name="Feltwell T."/>
            <person name="Goble A."/>
            <person name="Hamlin N."/>
            <person name="Hauser H."/>
            <person name="Holroyd S."/>
            <person name="Jagels K."/>
            <person name="Leather S."/>
            <person name="Moule S."/>
            <person name="Norberczak H."/>
            <person name="O'Neil S."/>
            <person name="Ormond D."/>
            <person name="Price C."/>
            <person name="Rabbinowitsch E."/>
            <person name="Rutter S."/>
            <person name="Sanders M."/>
            <person name="Saunders D."/>
            <person name="Seeger K."/>
            <person name="Sharp S."/>
            <person name="Simmonds M."/>
            <person name="Skelton J."/>
            <person name="Squares R."/>
            <person name="Squares S."/>
            <person name="Stevens K."/>
            <person name="Unwin L."/>
            <person name="Whitehead S."/>
            <person name="Barrell B.G."/>
            <person name="Maskell D.J."/>
        </authorList>
    </citation>
    <scope>NUCLEOTIDE SEQUENCE [LARGE SCALE GENOMIC DNA]</scope>
    <source>
        <strain>12822 / ATCC BAA-587 / NCTC 13253</strain>
    </source>
</reference>
<organism>
    <name type="scientific">Bordetella parapertussis (strain 12822 / ATCC BAA-587 / NCTC 13253)</name>
    <dbReference type="NCBI Taxonomy" id="257311"/>
    <lineage>
        <taxon>Bacteria</taxon>
        <taxon>Pseudomonadati</taxon>
        <taxon>Pseudomonadota</taxon>
        <taxon>Betaproteobacteria</taxon>
        <taxon>Burkholderiales</taxon>
        <taxon>Alcaligenaceae</taxon>
        <taxon>Bordetella</taxon>
    </lineage>
</organism>
<evidence type="ECO:0000255" key="1"/>
<evidence type="ECO:0000255" key="2">
    <source>
        <dbReference type="PROSITE-ProRule" id="PRU00278"/>
    </source>
</evidence>
<evidence type="ECO:0000305" key="3"/>
<name>PLP1_BORPA</name>
<feature type="signal peptide" evidence="1">
    <location>
        <begin position="1"/>
        <end position="19"/>
    </location>
</feature>
<feature type="chain" id="PRO_0000312517" description="Probable parvulin-type peptidyl-prolyl cis-trans isomerase">
    <location>
        <begin position="20"/>
        <end position="258"/>
    </location>
</feature>
<feature type="domain" description="PpiC" evidence="2">
    <location>
        <begin position="127"/>
        <end position="219"/>
    </location>
</feature>
<comment type="catalytic activity">
    <reaction>
        <text>[protein]-peptidylproline (omega=180) = [protein]-peptidylproline (omega=0)</text>
        <dbReference type="Rhea" id="RHEA:16237"/>
        <dbReference type="Rhea" id="RHEA-COMP:10747"/>
        <dbReference type="Rhea" id="RHEA-COMP:10748"/>
        <dbReference type="ChEBI" id="CHEBI:83833"/>
        <dbReference type="ChEBI" id="CHEBI:83834"/>
        <dbReference type="EC" id="5.2.1.8"/>
    </reaction>
</comment>
<comment type="similarity">
    <text evidence="3">Belongs to the PpiC/parvulin rotamase family.</text>
</comment>
<sequence>MKRIAMLAAACVIAVPAFAQNVATVNGKPITQKSLDEFVKLVVSQGATDSPQLREQIKQEMINRQVFVQAAEKDGVAKQADVQTEIELARQGILVRALMADYLQKHPVTDAQVKAEYEKIKKEQAGKMEYKVRHILVEDEKTANDLLAQVKSNKNKFDDLAKKNSKDPGSAERGGDLGWAPATNYVQPFAEAVTKLKKGQLVDKPVQTQFGWHVIQVDDTRPVEFPAMDQVRPQLEEMLRQQTLANYQKQLREQAKIQ</sequence>
<accession>Q7W5E0</accession>
<protein>
    <recommendedName>
        <fullName>Probable parvulin-type peptidyl-prolyl cis-trans isomerase</fullName>
        <shortName>PPIase</shortName>
        <ecNumber>5.2.1.8</ecNumber>
    </recommendedName>
    <alternativeName>
        <fullName>Rotamase</fullName>
    </alternativeName>
</protein>
<proteinExistence type="inferred from homology"/>
<dbReference type="EC" id="5.2.1.8"/>
<dbReference type="EMBL" id="BX640433">
    <property type="protein sequence ID" value="CAE38637.1"/>
    <property type="molecule type" value="Genomic_DNA"/>
</dbReference>
<dbReference type="RefSeq" id="WP_003821314.1">
    <property type="nucleotide sequence ID" value="NC_002928.3"/>
</dbReference>
<dbReference type="SMR" id="Q7W5E0"/>
<dbReference type="KEGG" id="bpa:BPP3352"/>
<dbReference type="HOGENOM" id="CLU_034646_1_1_4"/>
<dbReference type="Proteomes" id="UP000001421">
    <property type="component" value="Chromosome"/>
</dbReference>
<dbReference type="GO" id="GO:0003755">
    <property type="term" value="F:peptidyl-prolyl cis-trans isomerase activity"/>
    <property type="evidence" value="ECO:0007669"/>
    <property type="project" value="UniProtKB-KW"/>
</dbReference>
<dbReference type="Gene3D" id="1.10.8.1040">
    <property type="match status" value="1"/>
</dbReference>
<dbReference type="Gene3D" id="3.10.50.40">
    <property type="match status" value="1"/>
</dbReference>
<dbReference type="InterPro" id="IPR046357">
    <property type="entry name" value="PPIase_dom_sf"/>
</dbReference>
<dbReference type="InterPro" id="IPR000297">
    <property type="entry name" value="PPIase_PpiC"/>
</dbReference>
<dbReference type="InterPro" id="IPR023058">
    <property type="entry name" value="PPIase_PpiC_CS"/>
</dbReference>
<dbReference type="InterPro" id="IPR050245">
    <property type="entry name" value="PrsA_foldase"/>
</dbReference>
<dbReference type="PANTHER" id="PTHR47245:SF1">
    <property type="entry name" value="FOLDASE PROTEIN PRSA"/>
    <property type="match status" value="1"/>
</dbReference>
<dbReference type="PANTHER" id="PTHR47245">
    <property type="entry name" value="PEPTIDYLPROLYL ISOMERASE"/>
    <property type="match status" value="1"/>
</dbReference>
<dbReference type="Pfam" id="PF13616">
    <property type="entry name" value="Rotamase_3"/>
    <property type="match status" value="1"/>
</dbReference>
<dbReference type="SUPFAM" id="SSF54534">
    <property type="entry name" value="FKBP-like"/>
    <property type="match status" value="1"/>
</dbReference>
<dbReference type="PROSITE" id="PS01096">
    <property type="entry name" value="PPIC_PPIASE_1"/>
    <property type="match status" value="1"/>
</dbReference>
<dbReference type="PROSITE" id="PS50198">
    <property type="entry name" value="PPIC_PPIASE_2"/>
    <property type="match status" value="1"/>
</dbReference>
<gene>
    <name type="ordered locus">BPP3352</name>
</gene>
<keyword id="KW-0413">Isomerase</keyword>
<keyword id="KW-0697">Rotamase</keyword>
<keyword id="KW-0732">Signal</keyword>